<evidence type="ECO:0000250" key="1"/>
<evidence type="ECO:0000255" key="2"/>
<evidence type="ECO:0000303" key="3">
    <source>
    </source>
</evidence>
<evidence type="ECO:0000305" key="4"/>
<dbReference type="EMBL" id="EU233907">
    <property type="protein sequence ID" value="ABY71726.1"/>
    <property type="molecule type" value="mRNA"/>
</dbReference>
<dbReference type="ArachnoServer" id="AS000855">
    <property type="toxin name" value="U26-theraphotoxin-Cg1a"/>
</dbReference>
<dbReference type="GO" id="GO:0005576">
    <property type="term" value="C:extracellular region"/>
    <property type="evidence" value="ECO:0007669"/>
    <property type="project" value="UniProtKB-SubCell"/>
</dbReference>
<dbReference type="GO" id="GO:0019871">
    <property type="term" value="F:sodium channel inhibitor activity"/>
    <property type="evidence" value="ECO:0007669"/>
    <property type="project" value="InterPro"/>
</dbReference>
<dbReference type="GO" id="GO:0090729">
    <property type="term" value="F:toxin activity"/>
    <property type="evidence" value="ECO:0007669"/>
    <property type="project" value="UniProtKB-KW"/>
</dbReference>
<dbReference type="InterPro" id="IPR012627">
    <property type="entry name" value="Toxin_22"/>
</dbReference>
<dbReference type="Pfam" id="PF08092">
    <property type="entry name" value="Toxin_22"/>
    <property type="match status" value="1"/>
</dbReference>
<comment type="function">
    <text>Probable ion channel inhibitor.</text>
</comment>
<comment type="subcellular location">
    <subcellularLocation>
        <location evidence="1">Secreted</location>
    </subcellularLocation>
</comment>
<comment type="tissue specificity">
    <text evidence="4">Expressed by the venom gland.</text>
</comment>
<comment type="domain">
    <text evidence="1">The presence of a 'disulfide through disulfide knot' structurally defines this protein as a knottin.</text>
</comment>
<comment type="similarity">
    <text evidence="4">Belongs to the neurotoxin 14 (magi-1) family. 07 (Jztx-56) subfamily.</text>
</comment>
<keyword id="KW-0165">Cleavage on pair of basic residues</keyword>
<keyword id="KW-1015">Disulfide bond</keyword>
<keyword id="KW-0872">Ion channel impairing toxin</keyword>
<keyword id="KW-0960">Knottin</keyword>
<keyword id="KW-0964">Secreted</keyword>
<keyword id="KW-0732">Signal</keyword>
<keyword id="KW-0800">Toxin</keyword>
<proteinExistence type="inferred from homology"/>
<sequence>MNTIIPLLLLSLLITVYAYALEDGNKEEIQDIAESEFEASNEMLQLAHLLEADRAETEEDRNSRQKRCWGANVPCEDENSPCCSPLKCEKTFGYGWWYGSPFCVRSGSG</sequence>
<accession>B1P1H6</accession>
<feature type="signal peptide" evidence="2">
    <location>
        <begin position="1"/>
        <end position="18"/>
    </location>
</feature>
<feature type="propeptide" id="PRO_0000398526" evidence="1">
    <location>
        <begin position="19"/>
        <end position="67"/>
    </location>
</feature>
<feature type="peptide" id="PRO_0000398527" description="U26-theraphotoxin-Cg1a">
    <location>
        <begin position="68"/>
        <end position="109"/>
    </location>
</feature>
<feature type="disulfide bond" evidence="1">
    <location>
        <begin position="68"/>
        <end position="83"/>
    </location>
</feature>
<feature type="disulfide bond" evidence="1">
    <location>
        <begin position="75"/>
        <end position="88"/>
    </location>
</feature>
<feature type="disulfide bond" evidence="1">
    <location>
        <begin position="82"/>
        <end position="103"/>
    </location>
</feature>
<organism>
    <name type="scientific">Chilobrachys guangxiensis</name>
    <name type="common">Chinese earth tiger tarantula</name>
    <name type="synonym">Chilobrachys jingzhao</name>
    <dbReference type="NCBI Taxonomy" id="278060"/>
    <lineage>
        <taxon>Eukaryota</taxon>
        <taxon>Metazoa</taxon>
        <taxon>Ecdysozoa</taxon>
        <taxon>Arthropoda</taxon>
        <taxon>Chelicerata</taxon>
        <taxon>Arachnida</taxon>
        <taxon>Araneae</taxon>
        <taxon>Mygalomorphae</taxon>
        <taxon>Theraphosidae</taxon>
        <taxon>Chilobrachys</taxon>
    </lineage>
</organism>
<reference key="1">
    <citation type="journal article" date="2008" name="Cell. Mol. Life Sci.">
        <title>Molecular diversity and evolution of cystine knot toxins of the tarantula Chilobrachys jingzhao.</title>
        <authorList>
            <person name="Chen J."/>
            <person name="Deng M."/>
            <person name="He Q."/>
            <person name="Meng E."/>
            <person name="Jiang L."/>
            <person name="Liao Z."/>
            <person name="Rong M."/>
            <person name="Liang S."/>
        </authorList>
    </citation>
    <scope>NUCLEOTIDE SEQUENCE [LARGE SCALE MRNA]</scope>
    <source>
        <tissue>Venom gland</tissue>
    </source>
</reference>
<name>JZT56_CHIGU</name>
<protein>
    <recommendedName>
        <fullName>U26-theraphotoxin-Cg1a</fullName>
        <shortName>U26-TRTX-Cg1a</shortName>
    </recommendedName>
    <alternativeName>
        <fullName evidence="3">Jingzhaotoxin-56</fullName>
        <shortName evidence="3">JZTX-56</shortName>
    </alternativeName>
</protein>